<feature type="chain" id="PRO_1000052276" description="Large ribosomal subunit protein uL24">
    <location>
        <begin position="1"/>
        <end position="104"/>
    </location>
</feature>
<evidence type="ECO:0000255" key="1">
    <source>
        <dbReference type="HAMAP-Rule" id="MF_01326"/>
    </source>
</evidence>
<evidence type="ECO:0000305" key="2"/>
<gene>
    <name evidence="1" type="primary">rplX</name>
    <name type="ordered locus">Patl_1000</name>
</gene>
<reference key="1">
    <citation type="submission" date="2006-06" db="EMBL/GenBank/DDBJ databases">
        <title>Complete sequence of Pseudoalteromonas atlantica T6c.</title>
        <authorList>
            <consortium name="US DOE Joint Genome Institute"/>
            <person name="Copeland A."/>
            <person name="Lucas S."/>
            <person name="Lapidus A."/>
            <person name="Barry K."/>
            <person name="Detter J.C."/>
            <person name="Glavina del Rio T."/>
            <person name="Hammon N."/>
            <person name="Israni S."/>
            <person name="Dalin E."/>
            <person name="Tice H."/>
            <person name="Pitluck S."/>
            <person name="Saunders E."/>
            <person name="Brettin T."/>
            <person name="Bruce D."/>
            <person name="Han C."/>
            <person name="Tapia R."/>
            <person name="Gilna P."/>
            <person name="Schmutz J."/>
            <person name="Larimer F."/>
            <person name="Land M."/>
            <person name="Hauser L."/>
            <person name="Kyrpides N."/>
            <person name="Kim E."/>
            <person name="Karls A.C."/>
            <person name="Bartlett D."/>
            <person name="Higgins B.P."/>
            <person name="Richardson P."/>
        </authorList>
    </citation>
    <scope>NUCLEOTIDE SEQUENCE [LARGE SCALE GENOMIC DNA]</scope>
    <source>
        <strain>T6c / ATCC BAA-1087</strain>
    </source>
</reference>
<comment type="function">
    <text evidence="1">One of two assembly initiator proteins, it binds directly to the 5'-end of the 23S rRNA, where it nucleates assembly of the 50S subunit.</text>
</comment>
<comment type="function">
    <text evidence="1">One of the proteins that surrounds the polypeptide exit tunnel on the outside of the subunit.</text>
</comment>
<comment type="subunit">
    <text evidence="1">Part of the 50S ribosomal subunit.</text>
</comment>
<comment type="similarity">
    <text evidence="1">Belongs to the universal ribosomal protein uL24 family.</text>
</comment>
<keyword id="KW-0687">Ribonucleoprotein</keyword>
<keyword id="KW-0689">Ribosomal protein</keyword>
<keyword id="KW-0694">RNA-binding</keyword>
<keyword id="KW-0699">rRNA-binding</keyword>
<name>RL24_PSEA6</name>
<accession>Q15X62</accession>
<dbReference type="EMBL" id="CP000388">
    <property type="protein sequence ID" value="ABG39526.1"/>
    <property type="molecule type" value="Genomic_DNA"/>
</dbReference>
<dbReference type="RefSeq" id="WP_006990571.1">
    <property type="nucleotide sequence ID" value="NC_008228.1"/>
</dbReference>
<dbReference type="SMR" id="Q15X62"/>
<dbReference type="STRING" id="342610.Patl_1000"/>
<dbReference type="KEGG" id="pat:Patl_1000"/>
<dbReference type="eggNOG" id="COG0198">
    <property type="taxonomic scope" value="Bacteria"/>
</dbReference>
<dbReference type="HOGENOM" id="CLU_093315_2_2_6"/>
<dbReference type="OrthoDB" id="9807419at2"/>
<dbReference type="Proteomes" id="UP000001981">
    <property type="component" value="Chromosome"/>
</dbReference>
<dbReference type="GO" id="GO:1990904">
    <property type="term" value="C:ribonucleoprotein complex"/>
    <property type="evidence" value="ECO:0007669"/>
    <property type="project" value="UniProtKB-KW"/>
</dbReference>
<dbReference type="GO" id="GO:0005840">
    <property type="term" value="C:ribosome"/>
    <property type="evidence" value="ECO:0007669"/>
    <property type="project" value="UniProtKB-KW"/>
</dbReference>
<dbReference type="GO" id="GO:0019843">
    <property type="term" value="F:rRNA binding"/>
    <property type="evidence" value="ECO:0007669"/>
    <property type="project" value="UniProtKB-UniRule"/>
</dbReference>
<dbReference type="GO" id="GO:0003735">
    <property type="term" value="F:structural constituent of ribosome"/>
    <property type="evidence" value="ECO:0007669"/>
    <property type="project" value="InterPro"/>
</dbReference>
<dbReference type="GO" id="GO:0006412">
    <property type="term" value="P:translation"/>
    <property type="evidence" value="ECO:0007669"/>
    <property type="project" value="UniProtKB-UniRule"/>
</dbReference>
<dbReference type="CDD" id="cd06089">
    <property type="entry name" value="KOW_RPL26"/>
    <property type="match status" value="1"/>
</dbReference>
<dbReference type="FunFam" id="2.30.30.30:FF:000004">
    <property type="entry name" value="50S ribosomal protein L24"/>
    <property type="match status" value="1"/>
</dbReference>
<dbReference type="Gene3D" id="2.30.30.30">
    <property type="match status" value="1"/>
</dbReference>
<dbReference type="HAMAP" id="MF_01326_B">
    <property type="entry name" value="Ribosomal_uL24_B"/>
    <property type="match status" value="1"/>
</dbReference>
<dbReference type="InterPro" id="IPR005824">
    <property type="entry name" value="KOW"/>
</dbReference>
<dbReference type="InterPro" id="IPR014722">
    <property type="entry name" value="Rib_uL2_dom2"/>
</dbReference>
<dbReference type="InterPro" id="IPR003256">
    <property type="entry name" value="Ribosomal_uL24"/>
</dbReference>
<dbReference type="InterPro" id="IPR005825">
    <property type="entry name" value="Ribosomal_uL24_CS"/>
</dbReference>
<dbReference type="InterPro" id="IPR041988">
    <property type="entry name" value="Ribosomal_uL24_KOW"/>
</dbReference>
<dbReference type="InterPro" id="IPR008991">
    <property type="entry name" value="Translation_prot_SH3-like_sf"/>
</dbReference>
<dbReference type="NCBIfam" id="TIGR01079">
    <property type="entry name" value="rplX_bact"/>
    <property type="match status" value="1"/>
</dbReference>
<dbReference type="PANTHER" id="PTHR12903">
    <property type="entry name" value="MITOCHONDRIAL RIBOSOMAL PROTEIN L24"/>
    <property type="match status" value="1"/>
</dbReference>
<dbReference type="Pfam" id="PF00467">
    <property type="entry name" value="KOW"/>
    <property type="match status" value="1"/>
</dbReference>
<dbReference type="Pfam" id="PF17136">
    <property type="entry name" value="ribosomal_L24"/>
    <property type="match status" value="1"/>
</dbReference>
<dbReference type="SMART" id="SM00739">
    <property type="entry name" value="KOW"/>
    <property type="match status" value="1"/>
</dbReference>
<dbReference type="SUPFAM" id="SSF50104">
    <property type="entry name" value="Translation proteins SH3-like domain"/>
    <property type="match status" value="1"/>
</dbReference>
<dbReference type="PROSITE" id="PS01108">
    <property type="entry name" value="RIBOSOMAL_L24"/>
    <property type="match status" value="1"/>
</dbReference>
<protein>
    <recommendedName>
        <fullName evidence="1">Large ribosomal subunit protein uL24</fullName>
    </recommendedName>
    <alternativeName>
        <fullName evidence="2">50S ribosomal protein L24</fullName>
    </alternativeName>
</protein>
<organism>
    <name type="scientific">Pseudoalteromonas atlantica (strain T6c / ATCC BAA-1087)</name>
    <dbReference type="NCBI Taxonomy" id="3042615"/>
    <lineage>
        <taxon>Bacteria</taxon>
        <taxon>Pseudomonadati</taxon>
        <taxon>Pseudomonadota</taxon>
        <taxon>Gammaproteobacteria</taxon>
        <taxon>Alteromonadales</taxon>
        <taxon>Alteromonadaceae</taxon>
        <taxon>Paraglaciecola</taxon>
    </lineage>
</organism>
<proteinExistence type="inferred from homology"/>
<sequence>MARKIRRDDEIIVLAGKDKGKLGKVLKVLPAADRLIVEGVNLVKKHQKPNPQLGVTGGVIEKEASIHVSNVAIVNPKTGKADRIGFRFEDDKKVRFFKSDGELV</sequence>